<reference key="1">
    <citation type="journal article" date="2006" name="Genome Res.">
        <title>Massive genome erosion and functional adaptations provide insights into the symbiotic lifestyle of Sodalis glossinidius in the tsetse host.</title>
        <authorList>
            <person name="Toh H."/>
            <person name="Weiss B.L."/>
            <person name="Perkin S.A.H."/>
            <person name="Yamashita A."/>
            <person name="Oshima K."/>
            <person name="Hattori M."/>
            <person name="Aksoy S."/>
        </authorList>
    </citation>
    <scope>NUCLEOTIDE SEQUENCE [LARGE SCALE GENOMIC DNA]</scope>
    <source>
        <strain>morsitans</strain>
    </source>
</reference>
<keyword id="KW-0687">Ribonucleoprotein</keyword>
<keyword id="KW-0689">Ribosomal protein</keyword>
<comment type="similarity">
    <text evidence="1">Belongs to the bacterial ribosomal protein bL34 family.</text>
</comment>
<dbReference type="EMBL" id="AP008232">
    <property type="protein sequence ID" value="BAE75707.1"/>
    <property type="molecule type" value="Genomic_DNA"/>
</dbReference>
<dbReference type="RefSeq" id="WP_011412237.1">
    <property type="nucleotide sequence ID" value="NC_007712.1"/>
</dbReference>
<dbReference type="SMR" id="Q2NQ68"/>
<dbReference type="STRING" id="343509.SG2432"/>
<dbReference type="KEGG" id="sgl:SG2432"/>
<dbReference type="eggNOG" id="COG0230">
    <property type="taxonomic scope" value="Bacteria"/>
</dbReference>
<dbReference type="HOGENOM" id="CLU_129938_2_0_6"/>
<dbReference type="OrthoDB" id="9804164at2"/>
<dbReference type="BioCyc" id="SGLO343509:SGP1_RS28645-MONOMER"/>
<dbReference type="Proteomes" id="UP000001932">
    <property type="component" value="Chromosome"/>
</dbReference>
<dbReference type="GO" id="GO:1990904">
    <property type="term" value="C:ribonucleoprotein complex"/>
    <property type="evidence" value="ECO:0007669"/>
    <property type="project" value="UniProtKB-KW"/>
</dbReference>
<dbReference type="GO" id="GO:0005840">
    <property type="term" value="C:ribosome"/>
    <property type="evidence" value="ECO:0007669"/>
    <property type="project" value="UniProtKB-KW"/>
</dbReference>
<dbReference type="GO" id="GO:0003735">
    <property type="term" value="F:structural constituent of ribosome"/>
    <property type="evidence" value="ECO:0007669"/>
    <property type="project" value="InterPro"/>
</dbReference>
<dbReference type="GO" id="GO:0006412">
    <property type="term" value="P:translation"/>
    <property type="evidence" value="ECO:0007669"/>
    <property type="project" value="UniProtKB-UniRule"/>
</dbReference>
<dbReference type="FunFam" id="1.10.287.3980:FF:000001">
    <property type="entry name" value="Mitochondrial ribosomal protein L34"/>
    <property type="match status" value="1"/>
</dbReference>
<dbReference type="Gene3D" id="1.10.287.3980">
    <property type="match status" value="1"/>
</dbReference>
<dbReference type="HAMAP" id="MF_00391">
    <property type="entry name" value="Ribosomal_bL34"/>
    <property type="match status" value="1"/>
</dbReference>
<dbReference type="InterPro" id="IPR000271">
    <property type="entry name" value="Ribosomal_bL34"/>
</dbReference>
<dbReference type="InterPro" id="IPR020939">
    <property type="entry name" value="Ribosomal_bL34_CS"/>
</dbReference>
<dbReference type="NCBIfam" id="TIGR01030">
    <property type="entry name" value="rpmH_bact"/>
    <property type="match status" value="1"/>
</dbReference>
<dbReference type="PANTHER" id="PTHR14503:SF4">
    <property type="entry name" value="LARGE RIBOSOMAL SUBUNIT PROTEIN BL34M"/>
    <property type="match status" value="1"/>
</dbReference>
<dbReference type="PANTHER" id="PTHR14503">
    <property type="entry name" value="MITOCHONDRIAL RIBOSOMAL PROTEIN 34 FAMILY MEMBER"/>
    <property type="match status" value="1"/>
</dbReference>
<dbReference type="Pfam" id="PF00468">
    <property type="entry name" value="Ribosomal_L34"/>
    <property type="match status" value="1"/>
</dbReference>
<dbReference type="PROSITE" id="PS00784">
    <property type="entry name" value="RIBOSOMAL_L34"/>
    <property type="match status" value="1"/>
</dbReference>
<name>RL34_SODGM</name>
<organism>
    <name type="scientific">Sodalis glossinidius (strain morsitans)</name>
    <dbReference type="NCBI Taxonomy" id="343509"/>
    <lineage>
        <taxon>Bacteria</taxon>
        <taxon>Pseudomonadati</taxon>
        <taxon>Pseudomonadota</taxon>
        <taxon>Gammaproteobacteria</taxon>
        <taxon>Enterobacterales</taxon>
        <taxon>Bruguierivoracaceae</taxon>
        <taxon>Sodalis</taxon>
    </lineage>
</organism>
<protein>
    <recommendedName>
        <fullName evidence="1">Large ribosomal subunit protein bL34</fullName>
    </recommendedName>
    <alternativeName>
        <fullName evidence="3">50S ribosomal protein L34</fullName>
    </alternativeName>
</protein>
<accession>Q2NQ68</accession>
<feature type="chain" id="PRO_1000013453" description="Large ribosomal subunit protein bL34">
    <location>
        <begin position="1"/>
        <end position="47"/>
    </location>
</feature>
<feature type="region of interest" description="Disordered" evidence="2">
    <location>
        <begin position="28"/>
        <end position="47"/>
    </location>
</feature>
<feature type="compositionally biased region" description="Basic residues" evidence="2">
    <location>
        <begin position="31"/>
        <end position="40"/>
    </location>
</feature>
<sequence length="47" mass="5512">MKRTFQPSVLKRNRSHGFRARMATKNGRQVLARRRAKGRTRLTLSSK</sequence>
<proteinExistence type="inferred from homology"/>
<gene>
    <name evidence="1" type="primary">rpmH</name>
    <name type="ordered locus">SG2432</name>
</gene>
<evidence type="ECO:0000255" key="1">
    <source>
        <dbReference type="HAMAP-Rule" id="MF_00391"/>
    </source>
</evidence>
<evidence type="ECO:0000256" key="2">
    <source>
        <dbReference type="SAM" id="MobiDB-lite"/>
    </source>
</evidence>
<evidence type="ECO:0000305" key="3"/>